<protein>
    <recommendedName>
        <fullName evidence="1">1-deoxy-D-xylulose-5-phosphate synthase</fullName>
        <ecNumber evidence="1">2.2.1.7</ecNumber>
    </recommendedName>
    <alternativeName>
        <fullName evidence="1">1-deoxyxylulose-5-phosphate synthase</fullName>
        <shortName evidence="1">DXP synthase</shortName>
        <shortName evidence="1">DXPS</shortName>
    </alternativeName>
</protein>
<dbReference type="EC" id="2.2.1.7" evidence="1"/>
<dbReference type="EMBL" id="CP000681">
    <property type="protein sequence ID" value="ABP75003.1"/>
    <property type="molecule type" value="Genomic_DNA"/>
</dbReference>
<dbReference type="SMR" id="A4Y4X0"/>
<dbReference type="STRING" id="319224.Sputcn32_1275"/>
<dbReference type="KEGG" id="spc:Sputcn32_1275"/>
<dbReference type="eggNOG" id="COG1154">
    <property type="taxonomic scope" value="Bacteria"/>
</dbReference>
<dbReference type="HOGENOM" id="CLU_009227_1_4_6"/>
<dbReference type="UniPathway" id="UPA00064">
    <property type="reaction ID" value="UER00091"/>
</dbReference>
<dbReference type="GO" id="GO:0005829">
    <property type="term" value="C:cytosol"/>
    <property type="evidence" value="ECO:0007669"/>
    <property type="project" value="TreeGrafter"/>
</dbReference>
<dbReference type="GO" id="GO:0008661">
    <property type="term" value="F:1-deoxy-D-xylulose-5-phosphate synthase activity"/>
    <property type="evidence" value="ECO:0007669"/>
    <property type="project" value="UniProtKB-UniRule"/>
</dbReference>
<dbReference type="GO" id="GO:0000287">
    <property type="term" value="F:magnesium ion binding"/>
    <property type="evidence" value="ECO:0007669"/>
    <property type="project" value="UniProtKB-UniRule"/>
</dbReference>
<dbReference type="GO" id="GO:0030976">
    <property type="term" value="F:thiamine pyrophosphate binding"/>
    <property type="evidence" value="ECO:0007669"/>
    <property type="project" value="UniProtKB-UniRule"/>
</dbReference>
<dbReference type="GO" id="GO:0052865">
    <property type="term" value="P:1-deoxy-D-xylulose 5-phosphate biosynthetic process"/>
    <property type="evidence" value="ECO:0007669"/>
    <property type="project" value="UniProtKB-UniPathway"/>
</dbReference>
<dbReference type="GO" id="GO:0019288">
    <property type="term" value="P:isopentenyl diphosphate biosynthetic process, methylerythritol 4-phosphate pathway"/>
    <property type="evidence" value="ECO:0007669"/>
    <property type="project" value="TreeGrafter"/>
</dbReference>
<dbReference type="GO" id="GO:0016114">
    <property type="term" value="P:terpenoid biosynthetic process"/>
    <property type="evidence" value="ECO:0007669"/>
    <property type="project" value="UniProtKB-UniRule"/>
</dbReference>
<dbReference type="GO" id="GO:0009228">
    <property type="term" value="P:thiamine biosynthetic process"/>
    <property type="evidence" value="ECO:0007669"/>
    <property type="project" value="UniProtKB-UniRule"/>
</dbReference>
<dbReference type="CDD" id="cd02007">
    <property type="entry name" value="TPP_DXS"/>
    <property type="match status" value="1"/>
</dbReference>
<dbReference type="CDD" id="cd07033">
    <property type="entry name" value="TPP_PYR_DXS_TK_like"/>
    <property type="match status" value="1"/>
</dbReference>
<dbReference type="FunFam" id="3.40.50.920:FF:000002">
    <property type="entry name" value="1-deoxy-D-xylulose-5-phosphate synthase"/>
    <property type="match status" value="1"/>
</dbReference>
<dbReference type="FunFam" id="3.40.50.970:FF:000005">
    <property type="entry name" value="1-deoxy-D-xylulose-5-phosphate synthase"/>
    <property type="match status" value="1"/>
</dbReference>
<dbReference type="Gene3D" id="3.40.50.920">
    <property type="match status" value="1"/>
</dbReference>
<dbReference type="Gene3D" id="3.40.50.970">
    <property type="match status" value="2"/>
</dbReference>
<dbReference type="HAMAP" id="MF_00315">
    <property type="entry name" value="DXP_synth"/>
    <property type="match status" value="1"/>
</dbReference>
<dbReference type="InterPro" id="IPR005477">
    <property type="entry name" value="Dxylulose-5-P_synthase"/>
</dbReference>
<dbReference type="InterPro" id="IPR029061">
    <property type="entry name" value="THDP-binding"/>
</dbReference>
<dbReference type="InterPro" id="IPR009014">
    <property type="entry name" value="Transketo_C/PFOR_II"/>
</dbReference>
<dbReference type="InterPro" id="IPR005475">
    <property type="entry name" value="Transketolase-like_Pyr-bd"/>
</dbReference>
<dbReference type="InterPro" id="IPR020826">
    <property type="entry name" value="Transketolase_BS"/>
</dbReference>
<dbReference type="InterPro" id="IPR033248">
    <property type="entry name" value="Transketolase_C"/>
</dbReference>
<dbReference type="InterPro" id="IPR049557">
    <property type="entry name" value="Transketolase_CS"/>
</dbReference>
<dbReference type="NCBIfam" id="TIGR00204">
    <property type="entry name" value="dxs"/>
    <property type="match status" value="1"/>
</dbReference>
<dbReference type="NCBIfam" id="NF003933">
    <property type="entry name" value="PRK05444.2-2"/>
    <property type="match status" value="1"/>
</dbReference>
<dbReference type="PANTHER" id="PTHR43322">
    <property type="entry name" value="1-D-DEOXYXYLULOSE 5-PHOSPHATE SYNTHASE-RELATED"/>
    <property type="match status" value="1"/>
</dbReference>
<dbReference type="PANTHER" id="PTHR43322:SF5">
    <property type="entry name" value="1-DEOXY-D-XYLULOSE-5-PHOSPHATE SYNTHASE, CHLOROPLASTIC"/>
    <property type="match status" value="1"/>
</dbReference>
<dbReference type="Pfam" id="PF13292">
    <property type="entry name" value="DXP_synthase_N"/>
    <property type="match status" value="1"/>
</dbReference>
<dbReference type="Pfam" id="PF02779">
    <property type="entry name" value="Transket_pyr"/>
    <property type="match status" value="1"/>
</dbReference>
<dbReference type="Pfam" id="PF02780">
    <property type="entry name" value="Transketolase_C"/>
    <property type="match status" value="1"/>
</dbReference>
<dbReference type="SMART" id="SM00861">
    <property type="entry name" value="Transket_pyr"/>
    <property type="match status" value="1"/>
</dbReference>
<dbReference type="SUPFAM" id="SSF52518">
    <property type="entry name" value="Thiamin diphosphate-binding fold (THDP-binding)"/>
    <property type="match status" value="2"/>
</dbReference>
<dbReference type="SUPFAM" id="SSF52922">
    <property type="entry name" value="TK C-terminal domain-like"/>
    <property type="match status" value="1"/>
</dbReference>
<dbReference type="PROSITE" id="PS00801">
    <property type="entry name" value="TRANSKETOLASE_1"/>
    <property type="match status" value="1"/>
</dbReference>
<dbReference type="PROSITE" id="PS00802">
    <property type="entry name" value="TRANSKETOLASE_2"/>
    <property type="match status" value="1"/>
</dbReference>
<reference key="1">
    <citation type="submission" date="2007-04" db="EMBL/GenBank/DDBJ databases">
        <title>Complete sequence of Shewanella putrefaciens CN-32.</title>
        <authorList>
            <consortium name="US DOE Joint Genome Institute"/>
            <person name="Copeland A."/>
            <person name="Lucas S."/>
            <person name="Lapidus A."/>
            <person name="Barry K."/>
            <person name="Detter J.C."/>
            <person name="Glavina del Rio T."/>
            <person name="Hammon N."/>
            <person name="Israni S."/>
            <person name="Dalin E."/>
            <person name="Tice H."/>
            <person name="Pitluck S."/>
            <person name="Chain P."/>
            <person name="Malfatti S."/>
            <person name="Shin M."/>
            <person name="Vergez L."/>
            <person name="Schmutz J."/>
            <person name="Larimer F."/>
            <person name="Land M."/>
            <person name="Hauser L."/>
            <person name="Kyrpides N."/>
            <person name="Mikhailova N."/>
            <person name="Romine M.F."/>
            <person name="Fredrickson J."/>
            <person name="Tiedje J."/>
            <person name="Richardson P."/>
        </authorList>
    </citation>
    <scope>NUCLEOTIDE SEQUENCE [LARGE SCALE GENOMIC DNA]</scope>
    <source>
        <strain>CN-32 / ATCC BAA-453</strain>
    </source>
</reference>
<feature type="chain" id="PRO_1000019078" description="1-deoxy-D-xylulose-5-phosphate synthase">
    <location>
        <begin position="1"/>
        <end position="622"/>
    </location>
</feature>
<feature type="binding site" evidence="1">
    <location>
        <position position="80"/>
    </location>
    <ligand>
        <name>thiamine diphosphate</name>
        <dbReference type="ChEBI" id="CHEBI:58937"/>
    </ligand>
</feature>
<feature type="binding site" evidence="1">
    <location>
        <begin position="121"/>
        <end position="123"/>
    </location>
    <ligand>
        <name>thiamine diphosphate</name>
        <dbReference type="ChEBI" id="CHEBI:58937"/>
    </ligand>
</feature>
<feature type="binding site" evidence="1">
    <location>
        <position position="152"/>
    </location>
    <ligand>
        <name>Mg(2+)</name>
        <dbReference type="ChEBI" id="CHEBI:18420"/>
    </ligand>
</feature>
<feature type="binding site" evidence="1">
    <location>
        <begin position="153"/>
        <end position="154"/>
    </location>
    <ligand>
        <name>thiamine diphosphate</name>
        <dbReference type="ChEBI" id="CHEBI:58937"/>
    </ligand>
</feature>
<feature type="binding site" evidence="1">
    <location>
        <position position="181"/>
    </location>
    <ligand>
        <name>Mg(2+)</name>
        <dbReference type="ChEBI" id="CHEBI:18420"/>
    </ligand>
</feature>
<feature type="binding site" evidence="1">
    <location>
        <position position="181"/>
    </location>
    <ligand>
        <name>thiamine diphosphate</name>
        <dbReference type="ChEBI" id="CHEBI:58937"/>
    </ligand>
</feature>
<feature type="binding site" evidence="1">
    <location>
        <position position="288"/>
    </location>
    <ligand>
        <name>thiamine diphosphate</name>
        <dbReference type="ChEBI" id="CHEBI:58937"/>
    </ligand>
</feature>
<feature type="binding site" evidence="1">
    <location>
        <position position="370"/>
    </location>
    <ligand>
        <name>thiamine diphosphate</name>
        <dbReference type="ChEBI" id="CHEBI:58937"/>
    </ligand>
</feature>
<organism>
    <name type="scientific">Shewanella putrefaciens (strain CN-32 / ATCC BAA-453)</name>
    <dbReference type="NCBI Taxonomy" id="319224"/>
    <lineage>
        <taxon>Bacteria</taxon>
        <taxon>Pseudomonadati</taxon>
        <taxon>Pseudomonadota</taxon>
        <taxon>Gammaproteobacteria</taxon>
        <taxon>Alteromonadales</taxon>
        <taxon>Shewanellaceae</taxon>
        <taxon>Shewanella</taxon>
    </lineage>
</organism>
<sequence length="622" mass="67956">MSLDISQFPVLAQANTPNELRQLPQALLPQVADELREFLLKSVGMSSGHFASGLGTVELTVALHYVYNTPFDRLIWDVGHQAYPHKILTGRRDKMHTIRQKNGLHPFPWREESEYDTFSVGHSGTSISAALAMAVAAEKEQAGRKVVAVIGDGAMTGGMVFEAMNHAGDLHNDMLVVLNDNEMSISENVGALNNHLAQLMSGRFYTTLREGGKKVLKGMPVIKEMAKRTEEHLKGMVVPGTLFEELGFNYIGPIDGHDVDALVETMRNMRNLKGPQVLHIMTKKGRGYEPAEKDPIGWHAVPKFDPTQFKKPSTTPGLPTFSQVFGKWLCDIAEQDDKVLGITPAMREGSGMVEFSQRFPKQYFDAAIAEQHAVTLGAGFACEGYKPVVAIYSTFLQRGYDQLIHDVALQRLPVLFAIDRGGIVGADGPTHQGAFDLSFMRCIPNMVIMAPSDENECRQMLYTGYCYNAGPSAVRYPRGSATGATQVEAMTALPIGKGVIKRVGKRIALLNFGTTLASALTAADNLDATVVDMRFVKPLDAELVTEMAQTHDILVTVEENAIMGGAGSGVLELLQKLKMPKPVLQIGLPDEFIKHGSPEEVTHDLQLDAEGILAQINAYLAQ</sequence>
<accession>A4Y4X0</accession>
<comment type="function">
    <text evidence="1">Catalyzes the acyloin condensation reaction between C atoms 2 and 3 of pyruvate and glyceraldehyde 3-phosphate to yield 1-deoxy-D-xylulose-5-phosphate (DXP).</text>
</comment>
<comment type="catalytic activity">
    <reaction evidence="1">
        <text>D-glyceraldehyde 3-phosphate + pyruvate + H(+) = 1-deoxy-D-xylulose 5-phosphate + CO2</text>
        <dbReference type="Rhea" id="RHEA:12605"/>
        <dbReference type="ChEBI" id="CHEBI:15361"/>
        <dbReference type="ChEBI" id="CHEBI:15378"/>
        <dbReference type="ChEBI" id="CHEBI:16526"/>
        <dbReference type="ChEBI" id="CHEBI:57792"/>
        <dbReference type="ChEBI" id="CHEBI:59776"/>
        <dbReference type="EC" id="2.2.1.7"/>
    </reaction>
</comment>
<comment type="cofactor">
    <cofactor evidence="1">
        <name>Mg(2+)</name>
        <dbReference type="ChEBI" id="CHEBI:18420"/>
    </cofactor>
    <text evidence="1">Binds 1 Mg(2+) ion per subunit.</text>
</comment>
<comment type="cofactor">
    <cofactor evidence="1">
        <name>thiamine diphosphate</name>
        <dbReference type="ChEBI" id="CHEBI:58937"/>
    </cofactor>
    <text evidence="1">Binds 1 thiamine pyrophosphate per subunit.</text>
</comment>
<comment type="pathway">
    <text evidence="1">Metabolic intermediate biosynthesis; 1-deoxy-D-xylulose 5-phosphate biosynthesis; 1-deoxy-D-xylulose 5-phosphate from D-glyceraldehyde 3-phosphate and pyruvate: step 1/1.</text>
</comment>
<comment type="subunit">
    <text evidence="1">Homodimer.</text>
</comment>
<comment type="similarity">
    <text evidence="1">Belongs to the transketolase family. DXPS subfamily.</text>
</comment>
<evidence type="ECO:0000255" key="1">
    <source>
        <dbReference type="HAMAP-Rule" id="MF_00315"/>
    </source>
</evidence>
<proteinExistence type="inferred from homology"/>
<name>DXS_SHEPC</name>
<gene>
    <name evidence="1" type="primary">dxs</name>
    <name type="ordered locus">Sputcn32_1275</name>
</gene>
<keyword id="KW-0414">Isoprene biosynthesis</keyword>
<keyword id="KW-0460">Magnesium</keyword>
<keyword id="KW-0479">Metal-binding</keyword>
<keyword id="KW-0784">Thiamine biosynthesis</keyword>
<keyword id="KW-0786">Thiamine pyrophosphate</keyword>
<keyword id="KW-0808">Transferase</keyword>